<name>TMP_BPF41</name>
<organismHost>
    <name type="scientific">Lactococcus lactis</name>
    <dbReference type="NCBI Taxonomy" id="1358"/>
</organismHost>
<protein>
    <recommendedName>
        <fullName evidence="1">Tape measure protein</fullName>
        <shortName>TMP</shortName>
    </recommendedName>
</protein>
<proteinExistence type="inferred from homology"/>
<comment type="function">
    <text evidence="1">Tape measure protein. Serves as a base for tail tube protein polymerization and acts as a template for tail length determination.</text>
</comment>
<comment type="subcellular location">
    <subcellularLocation>
        <location>Virion</location>
    </subcellularLocation>
    <text evidence="1">Probably present inside the tail tube.</text>
</comment>
<comment type="similarity">
    <text evidence="2">Belongs to the skunalikevirus tape measure protein family.</text>
</comment>
<feature type="chain" id="PRO_0000066303" description="Tape measure protein">
    <location>
        <begin position="1"/>
        <end position="367" status="greater than"/>
    </location>
</feature>
<feature type="non-terminal residue">
    <location>
        <position position="367"/>
    </location>
</feature>
<accession>P26812</accession>
<reference key="1">
    <citation type="journal article" date="1991" name="Gene">
        <title>Cloning and nucleotide sequence of the major capsid protein from Lactococcus lactis ssp. cremoris bacteriophage F4-1.</title>
        <authorList>
            <person name="Chung D.K."/>
            <person name="Kim J.H."/>
            <person name="Batt C.A."/>
        </authorList>
    </citation>
    <scope>NUCLEOTIDE SEQUENCE [GENOMIC DNA]</scope>
</reference>
<dbReference type="EMBL" id="M37979">
    <property type="status" value="NOT_ANNOTATED_CDS"/>
    <property type="molecule type" value="Genomic_DNA"/>
</dbReference>
<dbReference type="PIR" id="PE0401">
    <property type="entry name" value="PE0401"/>
</dbReference>
<dbReference type="SMR" id="P26812"/>
<dbReference type="GO" id="GO:0044423">
    <property type="term" value="C:virion component"/>
    <property type="evidence" value="ECO:0007669"/>
    <property type="project" value="UniProtKB-KW"/>
</dbReference>
<dbReference type="GO" id="GO:0098003">
    <property type="term" value="P:viral tail assembly"/>
    <property type="evidence" value="ECO:0007669"/>
    <property type="project" value="UniProtKB-KW"/>
</dbReference>
<dbReference type="Gene3D" id="1.10.287.1490">
    <property type="match status" value="1"/>
</dbReference>
<dbReference type="InterPro" id="IPR013491">
    <property type="entry name" value="Tape_meas_N"/>
</dbReference>
<dbReference type="NCBIfam" id="TIGR02675">
    <property type="entry name" value="tape_meas_nterm"/>
    <property type="match status" value="1"/>
</dbReference>
<dbReference type="Pfam" id="PF20155">
    <property type="entry name" value="TMP_3"/>
    <property type="match status" value="1"/>
</dbReference>
<sequence>MASNATFEVEIYGNTTKFENSLRGVNTAMSGLRGEAKNLREALKLDPTNTDKMAQLQKNLQTQLGLSRDKATKLKEELSTVDKGTSAGQKKWLQLTRDLGTAETQANRLEGEIKQVEGAISSGSWDIDAKMDTKGVNSGIDGMKSRFSGLREIAVGVFRQIGSSAISAVGNGLRGWISDAMDTQTAMIALKNTMKFKGNGQDFDYVSKSMQKLARDTNANSEDTLKLSTTFIGLGDSAKTAVGKTEALVKANQAFGGTGENLKGVAQAYGQMSASGKVTAENINQLTDNNTALSASLKDTVMQMNPQLKQYGSFNEAVSNGAVSMDMLDKAMQKAADGSSGATKTIRDTWSGFNEDLSQALLPTLEA</sequence>
<organism>
    <name type="scientific">Lactococcus phage F4-1</name>
    <name type="common">Lactococcus lactis bacteriophage F4-1</name>
    <dbReference type="NCBI Taxonomy" id="12387"/>
    <lineage>
        <taxon>Viruses</taxon>
        <taxon>Duplodnaviria</taxon>
        <taxon>Heunggongvirae</taxon>
        <taxon>Uroviricota</taxon>
        <taxon>Caudoviricetes</taxon>
        <taxon>Skunavirus</taxon>
    </lineage>
</organism>
<keyword id="KW-1188">Viral release from host cell</keyword>
<keyword id="KW-1245">Viral tail assembly</keyword>
<keyword id="KW-0946">Virion</keyword>
<evidence type="ECO:0000250" key="1">
    <source>
        <dbReference type="UniProtKB" id="D3WAD2"/>
    </source>
</evidence>
<evidence type="ECO:0000305" key="2"/>